<dbReference type="EMBL" id="CP000560">
    <property type="protein sequence ID" value="ABS72565.1"/>
    <property type="molecule type" value="Genomic_DNA"/>
</dbReference>
<dbReference type="RefSeq" id="WP_007615239.1">
    <property type="nucleotide sequence ID" value="NC_009725.2"/>
</dbReference>
<dbReference type="SMR" id="A7Z0N9"/>
<dbReference type="GeneID" id="93079281"/>
<dbReference type="KEGG" id="bay:RBAM_001420"/>
<dbReference type="HOGENOM" id="CLU_041575_5_2_9"/>
<dbReference type="Proteomes" id="UP000001120">
    <property type="component" value="Chromosome"/>
</dbReference>
<dbReference type="GO" id="GO:1990904">
    <property type="term" value="C:ribonucleoprotein complex"/>
    <property type="evidence" value="ECO:0007669"/>
    <property type="project" value="UniProtKB-KW"/>
</dbReference>
<dbReference type="GO" id="GO:0005840">
    <property type="term" value="C:ribosome"/>
    <property type="evidence" value="ECO:0007669"/>
    <property type="project" value="UniProtKB-KW"/>
</dbReference>
<dbReference type="GO" id="GO:0019843">
    <property type="term" value="F:rRNA binding"/>
    <property type="evidence" value="ECO:0007669"/>
    <property type="project" value="UniProtKB-UniRule"/>
</dbReference>
<dbReference type="GO" id="GO:0003735">
    <property type="term" value="F:structural constituent of ribosome"/>
    <property type="evidence" value="ECO:0007669"/>
    <property type="project" value="InterPro"/>
</dbReference>
<dbReference type="GO" id="GO:0006412">
    <property type="term" value="P:translation"/>
    <property type="evidence" value="ECO:0007669"/>
    <property type="project" value="UniProtKB-UniRule"/>
</dbReference>
<dbReference type="FunFam" id="3.40.1370.10:FF:000003">
    <property type="entry name" value="50S ribosomal protein L4"/>
    <property type="match status" value="1"/>
</dbReference>
<dbReference type="Gene3D" id="3.40.1370.10">
    <property type="match status" value="1"/>
</dbReference>
<dbReference type="HAMAP" id="MF_01328_B">
    <property type="entry name" value="Ribosomal_uL4_B"/>
    <property type="match status" value="1"/>
</dbReference>
<dbReference type="InterPro" id="IPR002136">
    <property type="entry name" value="Ribosomal_uL4"/>
</dbReference>
<dbReference type="InterPro" id="IPR013005">
    <property type="entry name" value="Ribosomal_uL4-like"/>
</dbReference>
<dbReference type="InterPro" id="IPR023574">
    <property type="entry name" value="Ribosomal_uL4_dom_sf"/>
</dbReference>
<dbReference type="NCBIfam" id="TIGR03953">
    <property type="entry name" value="rplD_bact"/>
    <property type="match status" value="1"/>
</dbReference>
<dbReference type="PANTHER" id="PTHR10746">
    <property type="entry name" value="50S RIBOSOMAL PROTEIN L4"/>
    <property type="match status" value="1"/>
</dbReference>
<dbReference type="PANTHER" id="PTHR10746:SF6">
    <property type="entry name" value="LARGE RIBOSOMAL SUBUNIT PROTEIN UL4M"/>
    <property type="match status" value="1"/>
</dbReference>
<dbReference type="Pfam" id="PF00573">
    <property type="entry name" value="Ribosomal_L4"/>
    <property type="match status" value="1"/>
</dbReference>
<dbReference type="SUPFAM" id="SSF52166">
    <property type="entry name" value="Ribosomal protein L4"/>
    <property type="match status" value="1"/>
</dbReference>
<gene>
    <name evidence="1" type="primary">rplD</name>
    <name type="ordered locus">RBAM_001420</name>
</gene>
<keyword id="KW-0687">Ribonucleoprotein</keyword>
<keyword id="KW-0689">Ribosomal protein</keyword>
<keyword id="KW-0694">RNA-binding</keyword>
<keyword id="KW-0699">rRNA-binding</keyword>
<protein>
    <recommendedName>
        <fullName evidence="1">Large ribosomal subunit protein uL4</fullName>
    </recommendedName>
    <alternativeName>
        <fullName evidence="3">50S ribosomal protein L4</fullName>
    </alternativeName>
</protein>
<accession>A7Z0N9</accession>
<organism>
    <name type="scientific">Bacillus velezensis (strain DSM 23117 / BGSC 10A6 / LMG 26770 / FZB42)</name>
    <name type="common">Bacillus amyloliquefaciens subsp. plantarum</name>
    <dbReference type="NCBI Taxonomy" id="326423"/>
    <lineage>
        <taxon>Bacteria</taxon>
        <taxon>Bacillati</taxon>
        <taxon>Bacillota</taxon>
        <taxon>Bacilli</taxon>
        <taxon>Bacillales</taxon>
        <taxon>Bacillaceae</taxon>
        <taxon>Bacillus</taxon>
        <taxon>Bacillus amyloliquefaciens group</taxon>
    </lineage>
</organism>
<name>RL4_BACVZ</name>
<proteinExistence type="inferred from homology"/>
<comment type="function">
    <text evidence="1">One of the primary rRNA binding proteins, this protein initially binds near the 5'-end of the 23S rRNA. It is important during the early stages of 50S assembly. It makes multiple contacts with different domains of the 23S rRNA in the assembled 50S subunit and ribosome.</text>
</comment>
<comment type="function">
    <text evidence="1">Forms part of the polypeptide exit tunnel.</text>
</comment>
<comment type="subunit">
    <text evidence="1">Part of the 50S ribosomal subunit.</text>
</comment>
<comment type="similarity">
    <text evidence="1">Belongs to the universal ribosomal protein uL4 family.</text>
</comment>
<evidence type="ECO:0000255" key="1">
    <source>
        <dbReference type="HAMAP-Rule" id="MF_01328"/>
    </source>
</evidence>
<evidence type="ECO:0000256" key="2">
    <source>
        <dbReference type="SAM" id="MobiDB-lite"/>
    </source>
</evidence>
<evidence type="ECO:0000305" key="3"/>
<feature type="chain" id="PRO_1000052354" description="Large ribosomal subunit protein uL4">
    <location>
        <begin position="1"/>
        <end position="207"/>
    </location>
</feature>
<feature type="region of interest" description="Disordered" evidence="2">
    <location>
        <begin position="48"/>
        <end position="89"/>
    </location>
</feature>
<feature type="compositionally biased region" description="Basic residues" evidence="2">
    <location>
        <begin position="60"/>
        <end position="71"/>
    </location>
</feature>
<sequence>MPKVALYNQNGSTAGDIELNASVFGIEPNESVVFDAILMQRASLRQGSHKVKNRSEVRGGGRKPWRQKGTGRARQGSIRSPQWRGGGVVFGPTPRSYSYKLPKKVRRLAIKSVLSSKVNDNNIIVLEDLTLDTVKTKEMAAILKGLSVEKKALIVTADANEAVSLSARNIPGVTVVQANGINVLDVVNHEKLLITKAAVEKVEEVLA</sequence>
<reference key="1">
    <citation type="journal article" date="2007" name="Nat. Biotechnol.">
        <title>Comparative analysis of the complete genome sequence of the plant growth-promoting bacterium Bacillus amyloliquefaciens FZB42.</title>
        <authorList>
            <person name="Chen X.H."/>
            <person name="Koumoutsi A."/>
            <person name="Scholz R."/>
            <person name="Eisenreich A."/>
            <person name="Schneider K."/>
            <person name="Heinemeyer I."/>
            <person name="Morgenstern B."/>
            <person name="Voss B."/>
            <person name="Hess W.R."/>
            <person name="Reva O."/>
            <person name="Junge H."/>
            <person name="Voigt B."/>
            <person name="Jungblut P.R."/>
            <person name="Vater J."/>
            <person name="Suessmuth R."/>
            <person name="Liesegang H."/>
            <person name="Strittmatter A."/>
            <person name="Gottschalk G."/>
            <person name="Borriss R."/>
        </authorList>
    </citation>
    <scope>NUCLEOTIDE SEQUENCE [LARGE SCALE GENOMIC DNA]</scope>
    <source>
        <strain>DSM 23117 / BGSC 10A6 / LMG 26770 / FZB42</strain>
    </source>
</reference>